<keyword id="KW-0009">Actin-binding</keyword>
<keyword id="KW-0217">Developmental protein</keyword>
<keyword id="KW-0433">Leucine-rich repeat</keyword>
<keyword id="KW-1185">Reference proteome</keyword>
<keyword id="KW-0677">Repeat</keyword>
<evidence type="ECO:0000255" key="1"/>
<evidence type="ECO:0000256" key="2">
    <source>
        <dbReference type="SAM" id="MobiDB-lite"/>
    </source>
</evidence>
<evidence type="ECO:0000269" key="3">
    <source>
    </source>
</evidence>
<evidence type="ECO:0000305" key="4"/>
<reference key="1">
    <citation type="journal article" date="1993" name="Proc. Natl. Acad. Sci. U.S.A.">
        <title>The Drosophila melanogaster flightless-I gene involved in gastrulation and muscle degeneration encodes gelsolin-like and leucine-rich repeat domains and is conserved in Caenorhabditis elegans and humans.</title>
        <authorList>
            <person name="Campbell H.D."/>
            <person name="Schimansky T."/>
            <person name="Claudianos C."/>
            <person name="Ozsarac N."/>
            <person name="Kasprzak A.B."/>
            <person name="Cotsell J.N."/>
            <person name="Young I.G."/>
            <person name="de Couet H.G."/>
            <person name="Miklos G.L.G."/>
        </authorList>
    </citation>
    <scope>NUCLEOTIDE SEQUENCE [MRNA]</scope>
    <source>
        <strain>Oregon-R</strain>
        <tissue>Embryo</tissue>
    </source>
</reference>
<reference key="2">
    <citation type="journal article" date="1995" name="Genetics">
        <title>Molecular and mutational analysis of a gelsolin-family member encoded by the flightless I gene of Drosophila melanogaster.</title>
        <authorList>
            <person name="de Couet H.G."/>
            <person name="Fong K.S.K."/>
            <person name="Weeds A.G."/>
            <person name="McLaughlin P.J."/>
            <person name="Miklos G.L.G."/>
        </authorList>
    </citation>
    <scope>NUCLEOTIDE SEQUENCE [MRNA]</scope>
    <scope>VARIANT SER-601</scope>
    <source>
        <strain>Canton-S</strain>
    </source>
</reference>
<reference key="3">
    <citation type="journal article" date="1998" name="Proc. Natl. Acad. Sci. U.S.A.">
        <title>Data transferability from model organisms to human beings: insights from the functional genomics of the flightless region of Drosophila.</title>
        <authorList>
            <person name="Maleszka R."/>
            <person name="de Couet H.G."/>
            <person name="Miklos G.L.G."/>
        </authorList>
    </citation>
    <scope>NUCLEOTIDE SEQUENCE [GENOMIC DNA]</scope>
    <source>
        <strain>Canton-S</strain>
    </source>
</reference>
<reference key="4">
    <citation type="journal article" date="2000" name="Science">
        <title>The genome sequence of Drosophila melanogaster.</title>
        <authorList>
            <person name="Adams M.D."/>
            <person name="Celniker S.E."/>
            <person name="Holt R.A."/>
            <person name="Evans C.A."/>
            <person name="Gocayne J.D."/>
            <person name="Amanatides P.G."/>
            <person name="Scherer S.E."/>
            <person name="Li P.W."/>
            <person name="Hoskins R.A."/>
            <person name="Galle R.F."/>
            <person name="George R.A."/>
            <person name="Lewis S.E."/>
            <person name="Richards S."/>
            <person name="Ashburner M."/>
            <person name="Henderson S.N."/>
            <person name="Sutton G.G."/>
            <person name="Wortman J.R."/>
            <person name="Yandell M.D."/>
            <person name="Zhang Q."/>
            <person name="Chen L.X."/>
            <person name="Brandon R.C."/>
            <person name="Rogers Y.-H.C."/>
            <person name="Blazej R.G."/>
            <person name="Champe M."/>
            <person name="Pfeiffer B.D."/>
            <person name="Wan K.H."/>
            <person name="Doyle C."/>
            <person name="Baxter E.G."/>
            <person name="Helt G."/>
            <person name="Nelson C.R."/>
            <person name="Miklos G.L.G."/>
            <person name="Abril J.F."/>
            <person name="Agbayani A."/>
            <person name="An H.-J."/>
            <person name="Andrews-Pfannkoch C."/>
            <person name="Baldwin D."/>
            <person name="Ballew R.M."/>
            <person name="Basu A."/>
            <person name="Baxendale J."/>
            <person name="Bayraktaroglu L."/>
            <person name="Beasley E.M."/>
            <person name="Beeson K.Y."/>
            <person name="Benos P.V."/>
            <person name="Berman B.P."/>
            <person name="Bhandari D."/>
            <person name="Bolshakov S."/>
            <person name="Borkova D."/>
            <person name="Botchan M.R."/>
            <person name="Bouck J."/>
            <person name="Brokstein P."/>
            <person name="Brottier P."/>
            <person name="Burtis K.C."/>
            <person name="Busam D.A."/>
            <person name="Butler H."/>
            <person name="Cadieu E."/>
            <person name="Center A."/>
            <person name="Chandra I."/>
            <person name="Cherry J.M."/>
            <person name="Cawley S."/>
            <person name="Dahlke C."/>
            <person name="Davenport L.B."/>
            <person name="Davies P."/>
            <person name="de Pablos B."/>
            <person name="Delcher A."/>
            <person name="Deng Z."/>
            <person name="Mays A.D."/>
            <person name="Dew I."/>
            <person name="Dietz S.M."/>
            <person name="Dodson K."/>
            <person name="Doup L.E."/>
            <person name="Downes M."/>
            <person name="Dugan-Rocha S."/>
            <person name="Dunkov B.C."/>
            <person name="Dunn P."/>
            <person name="Durbin K.J."/>
            <person name="Evangelista C.C."/>
            <person name="Ferraz C."/>
            <person name="Ferriera S."/>
            <person name="Fleischmann W."/>
            <person name="Fosler C."/>
            <person name="Gabrielian A.E."/>
            <person name="Garg N.S."/>
            <person name="Gelbart W.M."/>
            <person name="Glasser K."/>
            <person name="Glodek A."/>
            <person name="Gong F."/>
            <person name="Gorrell J.H."/>
            <person name="Gu Z."/>
            <person name="Guan P."/>
            <person name="Harris M."/>
            <person name="Harris N.L."/>
            <person name="Harvey D.A."/>
            <person name="Heiman T.J."/>
            <person name="Hernandez J.R."/>
            <person name="Houck J."/>
            <person name="Hostin D."/>
            <person name="Houston K.A."/>
            <person name="Howland T.J."/>
            <person name="Wei M.-H."/>
            <person name="Ibegwam C."/>
            <person name="Jalali M."/>
            <person name="Kalush F."/>
            <person name="Karpen G.H."/>
            <person name="Ke Z."/>
            <person name="Kennison J.A."/>
            <person name="Ketchum K.A."/>
            <person name="Kimmel B.E."/>
            <person name="Kodira C.D."/>
            <person name="Kraft C.L."/>
            <person name="Kravitz S."/>
            <person name="Kulp D."/>
            <person name="Lai Z."/>
            <person name="Lasko P."/>
            <person name="Lei Y."/>
            <person name="Levitsky A.A."/>
            <person name="Li J.H."/>
            <person name="Li Z."/>
            <person name="Liang Y."/>
            <person name="Lin X."/>
            <person name="Liu X."/>
            <person name="Mattei B."/>
            <person name="McIntosh T.C."/>
            <person name="McLeod M.P."/>
            <person name="McPherson D."/>
            <person name="Merkulov G."/>
            <person name="Milshina N.V."/>
            <person name="Mobarry C."/>
            <person name="Morris J."/>
            <person name="Moshrefi A."/>
            <person name="Mount S.M."/>
            <person name="Moy M."/>
            <person name="Murphy B."/>
            <person name="Murphy L."/>
            <person name="Muzny D.M."/>
            <person name="Nelson D.L."/>
            <person name="Nelson D.R."/>
            <person name="Nelson K.A."/>
            <person name="Nixon K."/>
            <person name="Nusskern D.R."/>
            <person name="Pacleb J.M."/>
            <person name="Palazzolo M."/>
            <person name="Pittman G.S."/>
            <person name="Pan S."/>
            <person name="Pollard J."/>
            <person name="Puri V."/>
            <person name="Reese M.G."/>
            <person name="Reinert K."/>
            <person name="Remington K."/>
            <person name="Saunders R.D.C."/>
            <person name="Scheeler F."/>
            <person name="Shen H."/>
            <person name="Shue B.C."/>
            <person name="Siden-Kiamos I."/>
            <person name="Simpson M."/>
            <person name="Skupski M.P."/>
            <person name="Smith T.J."/>
            <person name="Spier E."/>
            <person name="Spradling A.C."/>
            <person name="Stapleton M."/>
            <person name="Strong R."/>
            <person name="Sun E."/>
            <person name="Svirskas R."/>
            <person name="Tector C."/>
            <person name="Turner R."/>
            <person name="Venter E."/>
            <person name="Wang A.H."/>
            <person name="Wang X."/>
            <person name="Wang Z.-Y."/>
            <person name="Wassarman D.A."/>
            <person name="Weinstock G.M."/>
            <person name="Weissenbach J."/>
            <person name="Williams S.M."/>
            <person name="Woodage T."/>
            <person name="Worley K.C."/>
            <person name="Wu D."/>
            <person name="Yang S."/>
            <person name="Yao Q.A."/>
            <person name="Ye J."/>
            <person name="Yeh R.-F."/>
            <person name="Zaveri J.S."/>
            <person name="Zhan M."/>
            <person name="Zhang G."/>
            <person name="Zhao Q."/>
            <person name="Zheng L."/>
            <person name="Zheng X.H."/>
            <person name="Zhong F.N."/>
            <person name="Zhong W."/>
            <person name="Zhou X."/>
            <person name="Zhu S.C."/>
            <person name="Zhu X."/>
            <person name="Smith H.O."/>
            <person name="Gibbs R.A."/>
            <person name="Myers E.W."/>
            <person name="Rubin G.M."/>
            <person name="Venter J.C."/>
        </authorList>
    </citation>
    <scope>NUCLEOTIDE SEQUENCE [LARGE SCALE GENOMIC DNA]</scope>
    <source>
        <strain>Berkeley</strain>
    </source>
</reference>
<reference key="5">
    <citation type="journal article" date="2002" name="Genome Biol.">
        <title>Annotation of the Drosophila melanogaster euchromatic genome: a systematic review.</title>
        <authorList>
            <person name="Misra S."/>
            <person name="Crosby M.A."/>
            <person name="Mungall C.J."/>
            <person name="Matthews B.B."/>
            <person name="Campbell K.S."/>
            <person name="Hradecky P."/>
            <person name="Huang Y."/>
            <person name="Kaminker J.S."/>
            <person name="Millburn G.H."/>
            <person name="Prochnik S.E."/>
            <person name="Smith C.D."/>
            <person name="Tupy J.L."/>
            <person name="Whitfield E.J."/>
            <person name="Bayraktaroglu L."/>
            <person name="Berman B.P."/>
            <person name="Bettencourt B.R."/>
            <person name="Celniker S.E."/>
            <person name="de Grey A.D.N.J."/>
            <person name="Drysdale R.A."/>
            <person name="Harris N.L."/>
            <person name="Richter J."/>
            <person name="Russo S."/>
            <person name="Schroeder A.J."/>
            <person name="Shu S.Q."/>
            <person name="Stapleton M."/>
            <person name="Yamada C."/>
            <person name="Ashburner M."/>
            <person name="Gelbart W.M."/>
            <person name="Rubin G.M."/>
            <person name="Lewis S.E."/>
        </authorList>
    </citation>
    <scope>GENOME REANNOTATION</scope>
    <source>
        <strain>Berkeley</strain>
    </source>
</reference>
<reference key="6">
    <citation type="journal article" date="2000" name="Science">
        <title>A Drosophila complementary DNA resource.</title>
        <authorList>
            <person name="Rubin G.M."/>
            <person name="Hong L."/>
            <person name="Brokstein P."/>
            <person name="Evans-Holm M."/>
            <person name="Frise E."/>
            <person name="Stapleton M."/>
            <person name="Harvey D.A."/>
        </authorList>
    </citation>
    <scope>NUCLEOTIDE SEQUENCE [LARGE SCALE MRNA]</scope>
    <source>
        <strain>Berkeley</strain>
        <tissue>Embryo</tissue>
    </source>
</reference>
<sequence>MSVLPFVRGVDFTKNDFSATFPSSMRQMSRVQWLTLDRTQLAEIPEELGHLQKLEHLSLNHNRLEKIFGELTELSCLRSLDLRHNQLKNSGIPPELFHLEELTTLDLSHNKLKEVPEGLERAKNLIVLNLSNNQIESIPTPLFIHLTDLLFLDLSHNRLETLPPQTRRLINLKTLDLSHNPLELFQLRQLPSLQSLEVLKMSGTQRTLLNFPTSIDSLANLCELDLSHNSLPKLPDCVYNVVTLVRLNLSDNELTELTAGVELWQRLESLNLSRNQLVALPAALCKLPKLRRLLVNDNKLNFEGIPSGIGKLGALEVFSAANNLLEMVPEGLCRCGALKQLNLSCNRLITLPDAIHLLEGLDQLDLRNNPELVMPPKPSEASKATSLEFYNIDFSLQTQLRLAGAAVPPSMPSSATPKDSTARKIRLRRGPRSEGDQDAAKVLKGMKDVAKDKDNEAGAVPEDGKPESLKPKRWDESLEKPQLDYSKFFEKDDGQLPGLTIWEIENFLPNKIEEVVHGKFYEGDCYIVLKTKFDDLGLLDWEIFFWIGNEATLDKRACAAIHAVNLRNFLGARCRTVREEQGDESEQFLSLFETEVIYIEGGRTATGFYTIEEMIHITRLYLVHAYGATIHLEPVAPAITSLDPRHAFVLDLGTHIYIWMGERSKNTLNSKARLMAEKISKTERKNKCEIQLERQGEESAEFWQGLGMTSEEADAAEPPKEHVPEDYQPVQPRLYQVQLGMGYLELPQVELPEQKLCHTLLNSKHVYILDCYTDLFVWFGKKSTRLVRAAAVKLSRELFNMMDRPDYALVMRVPEGNEMQIFRTKFAGWDEVMAVDFTRTAKSVAKTGANLTQWARQQETRTDLAALFMPRQSAMPLAEAEQLEEEWNYDLEMMEAFVLENKKFVRLPEEELGRFYTGECYVFLCRYCIPIEEPENGSEDGANPAADVSKSSANNQPEDEIQCVVYFWQGRNAGNMGWLTFTFTLQKKFKAMFGEELEVVRIFQQQENLKFMSHFKRKFIIHTGKRKDKAHTAKGKSPVEFFHLRSNGGALTTRLIQINPDAVHLNSTFCYILHVPFETEDDSQSGIVYVWIGSKACNEEAKLVQDIAEQMFNSPWVSLQILNEGDEPENFFWVALGGRKPYDTDAEYMNYTRLFRCSNERGYYTVAEKCADFCQDDLADDDIMILDNGEHVFLWMGPRCSEVEVKLAYKSAQVYIQHMRIKQPERPRKLFLTMKNKESRRFTKCFHGWSAFKVYL</sequence>
<proteinExistence type="evidence at transcript level"/>
<accession>Q24020</accession>
<accession>Q24088</accession>
<accession>Q9VRH0</accession>
<gene>
    <name type="primary">fliI</name>
    <name type="ORF">CG1484</name>
</gene>
<name>FLII_DROME</name>
<feature type="chain" id="PRO_0000218749" description="Protein flightless-1">
    <location>
        <begin position="1"/>
        <end position="1256"/>
    </location>
</feature>
<feature type="repeat" description="LRR 1" evidence="1">
    <location>
        <begin position="4"/>
        <end position="28"/>
    </location>
</feature>
<feature type="repeat" description="LRR 2" evidence="1">
    <location>
        <begin position="29"/>
        <end position="51"/>
    </location>
</feature>
<feature type="repeat" description="LRR 3" evidence="1">
    <location>
        <begin position="52"/>
        <end position="74"/>
    </location>
</feature>
<feature type="repeat" description="LRR 4" evidence="1">
    <location>
        <begin position="75"/>
        <end position="99"/>
    </location>
</feature>
<feature type="repeat" description="LRR 5" evidence="1">
    <location>
        <begin position="100"/>
        <end position="122"/>
    </location>
</feature>
<feature type="repeat" description="LRR 6" evidence="1">
    <location>
        <begin position="124"/>
        <end position="145"/>
    </location>
</feature>
<feature type="repeat" description="LRR 7" evidence="1">
    <location>
        <begin position="147"/>
        <end position="169"/>
    </location>
</feature>
<feature type="repeat" description="LRR 8" evidence="1">
    <location>
        <begin position="171"/>
        <end position="192"/>
    </location>
</feature>
<feature type="repeat" description="LRR 9" evidence="1">
    <location>
        <begin position="218"/>
        <end position="241"/>
    </location>
</feature>
<feature type="repeat" description="LRR 10" evidence="1">
    <location>
        <begin position="243"/>
        <end position="264"/>
    </location>
</feature>
<feature type="repeat" description="LRR 11" evidence="1">
    <location>
        <begin position="265"/>
        <end position="287"/>
    </location>
</feature>
<feature type="repeat" description="LRR 12" evidence="1">
    <location>
        <begin position="289"/>
        <end position="312"/>
    </location>
</feature>
<feature type="repeat" description="LRR 13" evidence="1">
    <location>
        <begin position="313"/>
        <end position="335"/>
    </location>
</feature>
<feature type="repeat" description="LRR 14" evidence="1">
    <location>
        <begin position="336"/>
        <end position="358"/>
    </location>
</feature>
<feature type="repeat" description="LRR 15" evidence="1">
    <location>
        <begin position="360"/>
        <end position="381"/>
    </location>
</feature>
<feature type="repeat" description="Gelsolin-like 1" evidence="1">
    <location>
        <begin position="512"/>
        <end position="589"/>
    </location>
</feature>
<feature type="repeat" description="Gelsolin-like 2" evidence="1">
    <location>
        <begin position="633"/>
        <end position="703"/>
    </location>
</feature>
<feature type="repeat" description="Gelsolin-like 3" evidence="1">
    <location>
        <begin position="749"/>
        <end position="822"/>
    </location>
</feature>
<feature type="repeat" description="Gelsolin-like 4" evidence="1">
    <location>
        <begin position="1168"/>
        <end position="1242"/>
    </location>
</feature>
<feature type="region of interest" description="Disordered" evidence="2">
    <location>
        <begin position="405"/>
        <end position="476"/>
    </location>
</feature>
<feature type="compositionally biased region" description="Basic and acidic residues" evidence="2">
    <location>
        <begin position="431"/>
        <end position="476"/>
    </location>
</feature>
<feature type="sequence variant" evidence="3">
    <original>G</original>
    <variation>S</variation>
    <location>
        <position position="601"/>
    </location>
</feature>
<feature type="sequence conflict" description="In Ref. 3; AAC28407." evidence="4" ref="3">
    <original>T</original>
    <variation>A</variation>
    <location>
        <position position="1068"/>
    </location>
</feature>
<dbReference type="EMBL" id="U01182">
    <property type="protein sequence ID" value="AAC03566.1"/>
    <property type="molecule type" value="mRNA"/>
</dbReference>
<dbReference type="EMBL" id="AF017777">
    <property type="protein sequence ID" value="AAC28407.1"/>
    <property type="molecule type" value="Genomic_DNA"/>
</dbReference>
<dbReference type="EMBL" id="AE014298">
    <property type="protein sequence ID" value="AAF50830.2"/>
    <property type="molecule type" value="Genomic_DNA"/>
</dbReference>
<dbReference type="EMBL" id="AF132184">
    <property type="protein sequence ID" value="AAD34772.1"/>
    <property type="molecule type" value="mRNA"/>
</dbReference>
<dbReference type="PIR" id="S60461">
    <property type="entry name" value="S60461"/>
</dbReference>
<dbReference type="RefSeq" id="NP_525097.1">
    <property type="nucleotide sequence ID" value="NM_080358.3"/>
</dbReference>
<dbReference type="SMR" id="Q24020"/>
<dbReference type="BioGRID" id="59388">
    <property type="interactions" value="7"/>
</dbReference>
<dbReference type="FunCoup" id="Q24020">
    <property type="interactions" value="1384"/>
</dbReference>
<dbReference type="IntAct" id="Q24020">
    <property type="interactions" value="46"/>
</dbReference>
<dbReference type="STRING" id="7227.FBpp0076893"/>
<dbReference type="PaxDb" id="7227-FBpp0076893"/>
<dbReference type="DNASU" id="33110"/>
<dbReference type="EnsemblMetazoa" id="FBtr0077192">
    <property type="protein sequence ID" value="FBpp0076893"/>
    <property type="gene ID" value="FBgn0000709"/>
</dbReference>
<dbReference type="GeneID" id="33110"/>
<dbReference type="KEGG" id="dme:Dmel_CG1484"/>
<dbReference type="AGR" id="FB:FBgn0000709"/>
<dbReference type="CTD" id="2314"/>
<dbReference type="FlyBase" id="FBgn0000709">
    <property type="gene designation" value="fliI"/>
</dbReference>
<dbReference type="VEuPathDB" id="VectorBase:FBgn0000709"/>
<dbReference type="eggNOG" id="KOG0443">
    <property type="taxonomic scope" value="Eukaryota"/>
</dbReference>
<dbReference type="eggNOG" id="KOG0444">
    <property type="taxonomic scope" value="Eukaryota"/>
</dbReference>
<dbReference type="GeneTree" id="ENSGT00940000156643"/>
<dbReference type="HOGENOM" id="CLU_002568_1_0_1"/>
<dbReference type="InParanoid" id="Q24020"/>
<dbReference type="OMA" id="CFHGWSA"/>
<dbReference type="OrthoDB" id="20529at2759"/>
<dbReference type="PhylomeDB" id="Q24020"/>
<dbReference type="SignaLink" id="Q24020"/>
<dbReference type="BioGRID-ORCS" id="33110">
    <property type="hits" value="0 hits in 1 CRISPR screen"/>
</dbReference>
<dbReference type="ChiTaRS" id="fliI">
    <property type="organism name" value="fly"/>
</dbReference>
<dbReference type="GenomeRNAi" id="33110"/>
<dbReference type="PRO" id="PR:Q24020"/>
<dbReference type="Proteomes" id="UP000000803">
    <property type="component" value="Chromosome X"/>
</dbReference>
<dbReference type="Bgee" id="FBgn0000709">
    <property type="expression patterns" value="Expressed in copper cell (Drosophila) in digestive tract and 121 other cell types or tissues"/>
</dbReference>
<dbReference type="GO" id="GO:0015629">
    <property type="term" value="C:actin cytoskeleton"/>
    <property type="evidence" value="ECO:0000318"/>
    <property type="project" value="GO_Central"/>
</dbReference>
<dbReference type="GO" id="GO:0005737">
    <property type="term" value="C:cytoplasm"/>
    <property type="evidence" value="ECO:0000318"/>
    <property type="project" value="GO_Central"/>
</dbReference>
<dbReference type="GO" id="GO:0005634">
    <property type="term" value="C:nucleus"/>
    <property type="evidence" value="ECO:0000318"/>
    <property type="project" value="GO_Central"/>
</dbReference>
<dbReference type="GO" id="GO:0030018">
    <property type="term" value="C:Z disc"/>
    <property type="evidence" value="ECO:0000314"/>
    <property type="project" value="FlyBase"/>
</dbReference>
<dbReference type="GO" id="GO:0003779">
    <property type="term" value="F:actin binding"/>
    <property type="evidence" value="ECO:0000250"/>
    <property type="project" value="FlyBase"/>
</dbReference>
<dbReference type="GO" id="GO:0051015">
    <property type="term" value="F:actin filament binding"/>
    <property type="evidence" value="ECO:0000318"/>
    <property type="project" value="GO_Central"/>
</dbReference>
<dbReference type="GO" id="GO:0005509">
    <property type="term" value="F:calcium ion binding"/>
    <property type="evidence" value="ECO:0000250"/>
    <property type="project" value="FlyBase"/>
</dbReference>
<dbReference type="GO" id="GO:0005546">
    <property type="term" value="F:phosphatidylinositol-4,5-bisphosphate binding"/>
    <property type="evidence" value="ECO:0000318"/>
    <property type="project" value="GO_Central"/>
</dbReference>
<dbReference type="GO" id="GO:0051014">
    <property type="term" value="P:actin filament severing"/>
    <property type="evidence" value="ECO:0000318"/>
    <property type="project" value="GO_Central"/>
</dbReference>
<dbReference type="GO" id="GO:0008154">
    <property type="term" value="P:actin polymerization or depolymerization"/>
    <property type="evidence" value="ECO:0000318"/>
    <property type="project" value="GO_Central"/>
</dbReference>
<dbReference type="GO" id="GO:0007527">
    <property type="term" value="P:adult somatic muscle development"/>
    <property type="evidence" value="ECO:0000315"/>
    <property type="project" value="FlyBase"/>
</dbReference>
<dbReference type="GO" id="GO:0051016">
    <property type="term" value="P:barbed-end actin filament capping"/>
    <property type="evidence" value="ECO:0000318"/>
    <property type="project" value="GO_Central"/>
</dbReference>
<dbReference type="GO" id="GO:0010004">
    <property type="term" value="P:gastrulation involving germ band extension"/>
    <property type="evidence" value="ECO:0000315"/>
    <property type="project" value="FlyBase"/>
</dbReference>
<dbReference type="GO" id="GO:0030239">
    <property type="term" value="P:myofibril assembly"/>
    <property type="evidence" value="ECO:0000315"/>
    <property type="project" value="FlyBase"/>
</dbReference>
<dbReference type="CDD" id="cd11280">
    <property type="entry name" value="gelsolin_like"/>
    <property type="match status" value="2"/>
</dbReference>
<dbReference type="CDD" id="cd11290">
    <property type="entry name" value="gelsolin_S1_like"/>
    <property type="match status" value="1"/>
</dbReference>
<dbReference type="CDD" id="cd11292">
    <property type="entry name" value="gelsolin_S3_like"/>
    <property type="match status" value="1"/>
</dbReference>
<dbReference type="CDD" id="cd11288">
    <property type="entry name" value="gelsolin_S5_like"/>
    <property type="match status" value="1"/>
</dbReference>
<dbReference type="CDD" id="cd11291">
    <property type="entry name" value="gelsolin_S6_like"/>
    <property type="match status" value="1"/>
</dbReference>
<dbReference type="FunFam" id="3.80.10.10:FF:000033">
    <property type="entry name" value="FLII, actin remodeling protein"/>
    <property type="match status" value="1"/>
</dbReference>
<dbReference type="FunFam" id="3.80.10.10:FF:000054">
    <property type="entry name" value="FLII, actin remodeling protein"/>
    <property type="match status" value="1"/>
</dbReference>
<dbReference type="FunFam" id="3.40.20.10:FF:000019">
    <property type="entry name" value="protein flightless-1 homolog isoform X1"/>
    <property type="match status" value="1"/>
</dbReference>
<dbReference type="FunFam" id="3.40.20.10:FF:000020">
    <property type="entry name" value="protein flightless-1 homolog isoform X1"/>
    <property type="match status" value="1"/>
</dbReference>
<dbReference type="FunFam" id="3.40.20.10:FF:000031">
    <property type="entry name" value="protein flightless-1 homolog isoform X1"/>
    <property type="match status" value="1"/>
</dbReference>
<dbReference type="FunFam" id="3.40.20.10:FF:000034">
    <property type="entry name" value="protein flightless-1 homolog isoform X1"/>
    <property type="match status" value="1"/>
</dbReference>
<dbReference type="FunFam" id="3.40.20.10:FF:000021">
    <property type="entry name" value="protein flightless-1 homolog isoform X2"/>
    <property type="match status" value="1"/>
</dbReference>
<dbReference type="Gene3D" id="3.80.10.10">
    <property type="entry name" value="Ribonuclease Inhibitor"/>
    <property type="match status" value="3"/>
</dbReference>
<dbReference type="Gene3D" id="3.40.20.10">
    <property type="entry name" value="Severin"/>
    <property type="match status" value="6"/>
</dbReference>
<dbReference type="InterPro" id="IPR029006">
    <property type="entry name" value="ADF-H/Gelsolin-like_dom_sf"/>
</dbReference>
<dbReference type="InterPro" id="IPR007123">
    <property type="entry name" value="Gelsolin-like_dom"/>
</dbReference>
<dbReference type="InterPro" id="IPR001611">
    <property type="entry name" value="Leu-rich_rpt"/>
</dbReference>
<dbReference type="InterPro" id="IPR003591">
    <property type="entry name" value="Leu-rich_rpt_typical-subtyp"/>
</dbReference>
<dbReference type="InterPro" id="IPR032675">
    <property type="entry name" value="LRR_dom_sf"/>
</dbReference>
<dbReference type="InterPro" id="IPR007122">
    <property type="entry name" value="Villin/Gelsolin"/>
</dbReference>
<dbReference type="PANTHER" id="PTHR11977:SF51">
    <property type="entry name" value="PROTEIN FLIGHTLESS-1 HOMOLOG"/>
    <property type="match status" value="1"/>
</dbReference>
<dbReference type="PANTHER" id="PTHR11977">
    <property type="entry name" value="VILLIN"/>
    <property type="match status" value="1"/>
</dbReference>
<dbReference type="Pfam" id="PF00626">
    <property type="entry name" value="Gelsolin"/>
    <property type="match status" value="4"/>
</dbReference>
<dbReference type="Pfam" id="PF00560">
    <property type="entry name" value="LRR_1"/>
    <property type="match status" value="1"/>
</dbReference>
<dbReference type="Pfam" id="PF13855">
    <property type="entry name" value="LRR_8"/>
    <property type="match status" value="3"/>
</dbReference>
<dbReference type="PRINTS" id="PR00597">
    <property type="entry name" value="GELSOLIN"/>
</dbReference>
<dbReference type="PRINTS" id="PR00019">
    <property type="entry name" value="LEURICHRPT"/>
</dbReference>
<dbReference type="SMART" id="SM00262">
    <property type="entry name" value="GEL"/>
    <property type="match status" value="6"/>
</dbReference>
<dbReference type="SMART" id="SM00364">
    <property type="entry name" value="LRR_BAC"/>
    <property type="match status" value="7"/>
</dbReference>
<dbReference type="SMART" id="SM00365">
    <property type="entry name" value="LRR_SD22"/>
    <property type="match status" value="6"/>
</dbReference>
<dbReference type="SMART" id="SM00369">
    <property type="entry name" value="LRR_TYP"/>
    <property type="match status" value="12"/>
</dbReference>
<dbReference type="SUPFAM" id="SSF55753">
    <property type="entry name" value="Actin depolymerizing proteins"/>
    <property type="match status" value="6"/>
</dbReference>
<dbReference type="SUPFAM" id="SSF52058">
    <property type="entry name" value="L domain-like"/>
    <property type="match status" value="1"/>
</dbReference>
<dbReference type="PROSITE" id="PS51450">
    <property type="entry name" value="LRR"/>
    <property type="match status" value="10"/>
</dbReference>
<protein>
    <recommendedName>
        <fullName>Protein flightless-1</fullName>
    </recommendedName>
    <alternativeName>
        <fullName>Flightless-I</fullName>
    </alternativeName>
</protein>
<comment type="function">
    <text>May play a key role in embryonic cellularization by interacting with both the cytoskeleton and other cellular components. Alternatively, it may play a structural role in indirect flight muscle. Vital for embryonic development.</text>
</comment>
<comment type="tissue specificity">
    <text>Found in ovaries, larval fat bodies, brain and adult thorax.</text>
</comment>
<comment type="developmental stage">
    <text>Expressed both maternally and zygotically.</text>
</comment>
<comment type="domain">
    <text>Consists of a leucine-rich N-terminal half, which is likely to be involved in protein-protein interaction, and a C-terminal half which has high sequence similarity to gelsolin and is therefore likely to be involved in actin-binding.</text>
</comment>
<comment type="similarity">
    <text evidence="4">Belongs to the villin/gelsolin family.</text>
</comment>
<organism>
    <name type="scientific">Drosophila melanogaster</name>
    <name type="common">Fruit fly</name>
    <dbReference type="NCBI Taxonomy" id="7227"/>
    <lineage>
        <taxon>Eukaryota</taxon>
        <taxon>Metazoa</taxon>
        <taxon>Ecdysozoa</taxon>
        <taxon>Arthropoda</taxon>
        <taxon>Hexapoda</taxon>
        <taxon>Insecta</taxon>
        <taxon>Pterygota</taxon>
        <taxon>Neoptera</taxon>
        <taxon>Endopterygota</taxon>
        <taxon>Diptera</taxon>
        <taxon>Brachycera</taxon>
        <taxon>Muscomorpha</taxon>
        <taxon>Ephydroidea</taxon>
        <taxon>Drosophilidae</taxon>
        <taxon>Drosophila</taxon>
        <taxon>Sophophora</taxon>
    </lineage>
</organism>